<feature type="chain" id="PRO_0000053874" description="Pleckstrin homology domain-containing family A member 1">
    <location>
        <begin position="1"/>
        <end position="383"/>
    </location>
</feature>
<feature type="domain" description="PH 1" evidence="3">
    <location>
        <begin position="7"/>
        <end position="112"/>
    </location>
</feature>
<feature type="domain" description="PH 2" evidence="3">
    <location>
        <begin position="191"/>
        <end position="289"/>
    </location>
</feature>
<feature type="region of interest" description="Disordered" evidence="4">
    <location>
        <begin position="362"/>
        <end position="383"/>
    </location>
</feature>
<feature type="compositionally biased region" description="Low complexity" evidence="4">
    <location>
        <begin position="370"/>
        <end position="383"/>
    </location>
</feature>
<feature type="splice variant" id="VSP_009764" description="In isoform 2." evidence="5">
    <location>
        <begin position="68"/>
        <end position="115"/>
    </location>
</feature>
<feature type="splice variant" id="VSP_009767" description="In isoform 2." evidence="5">
    <original>MRQARRLSNPCIQRSIPAGLQNPNSLSVLPGPQPPPHIPQPLAATLWSQAVPWRSEEFTNLLPRSSQGTSRSRLSLQESQLPK</original>
    <variation>EHSGWPSEPKFTVRPAGAAATASHSPASRSHSLVSGCAMEKRGVYQSLAKVKPGNFKVQTVSPREPASKVTEQALLRPQSKNGPQGEDGEPVDLDDASLPVSDV</variation>
    <location>
        <begin position="301"/>
        <end position="383"/>
    </location>
</feature>
<feature type="modified residue" description="Phosphoserine" evidence="6">
    <location sequence="Q8BUL6-2">
        <position position="284"/>
    </location>
</feature>
<proteinExistence type="evidence at protein level"/>
<evidence type="ECO:0000250" key="1"/>
<evidence type="ECO:0000250" key="2">
    <source>
        <dbReference type="UniProtKB" id="Q9HB21"/>
    </source>
</evidence>
<evidence type="ECO:0000255" key="3">
    <source>
        <dbReference type="PROSITE-ProRule" id="PRU00145"/>
    </source>
</evidence>
<evidence type="ECO:0000256" key="4">
    <source>
        <dbReference type="SAM" id="MobiDB-lite"/>
    </source>
</evidence>
<evidence type="ECO:0000303" key="5">
    <source>
    </source>
</evidence>
<evidence type="ECO:0007744" key="6">
    <source>
    </source>
</evidence>
<accession>Q8BUL6</accession>
<accession>Q8BK96</accession>
<accession>Q8BXU1</accession>
<accession>Q8VE13</accession>
<sequence length="383" mass="43371">MPYVDRQNRICGFLDIEENENSGKFLRRYFILDTREDSFVWYMDNPQNLPSGSSRVGAIKLTYISKVSDATKLRPKAEFCFVMNAGMRKYFLQANDQQDLVEWVNVLNKAIKITVPKQSDSQPASDSLSRQGDCGKKQVSYRTDIVGGVPIITPTQKEEVNECGESLDRNNLKRSQSHLPYFAPKPPSDSAVIKAGYCVKQGAVMKNWKRRYFQLDENTIGYFKSELEKEPLRVIPLKEVHKVQECKQSDIMMRDNLFEIVTTSRTFYVQADSPEEMHSWIKAVSGAIVAQRGPGRSSSSMRQARRLSNPCIQRSIPAGLQNPNSLSVLPGPQPPPHIPQPLAATLWSQAVPWRSEEFTNLLPRSSQGTSRSRLSLQESQLPK</sequence>
<gene>
    <name type="primary">Plekha1</name>
    <name type="synonym">Tapp1</name>
</gene>
<comment type="function">
    <text evidence="1">Binds specifically to phosphatidylinositol 3,4-diphosphate (PtdIns3,4P2), but not to other phosphoinositides. May recruit other proteins to the plasma membrane (By similarity).</text>
</comment>
<comment type="subunit">
    <text evidence="1">Interacts with MPDZ and PTPN13.</text>
</comment>
<comment type="subcellular location">
    <subcellularLocation>
        <location evidence="2">Cytoplasm</location>
    </subcellularLocation>
    <subcellularLocation>
        <location evidence="2">Cell membrane</location>
        <topology evidence="2">Peripheral membrane protein</topology>
    </subcellularLocation>
    <subcellularLocation>
        <location evidence="2">Nucleus</location>
    </subcellularLocation>
    <text evidence="2">Locates to the plasma membrane after treatments that stimulate the production of PtdIns3,4P2.</text>
</comment>
<comment type="alternative products">
    <event type="alternative splicing"/>
    <isoform>
        <id>Q8BUL6-1</id>
        <name>1</name>
        <sequence type="displayed"/>
    </isoform>
    <isoform>
        <id>Q8BUL6-2</id>
        <name>2</name>
        <sequence type="described" ref="VSP_009764 VSP_009767"/>
    </isoform>
</comment>
<comment type="domain">
    <text>Binds to membranes enriched in PtdIns3,4P2 via the C-terminal PH domain.</text>
</comment>
<reference key="1">
    <citation type="journal article" date="2005" name="Science">
        <title>The transcriptional landscape of the mammalian genome.</title>
        <authorList>
            <person name="Carninci P."/>
            <person name="Kasukawa T."/>
            <person name="Katayama S."/>
            <person name="Gough J."/>
            <person name="Frith M.C."/>
            <person name="Maeda N."/>
            <person name="Oyama R."/>
            <person name="Ravasi T."/>
            <person name="Lenhard B."/>
            <person name="Wells C."/>
            <person name="Kodzius R."/>
            <person name="Shimokawa K."/>
            <person name="Bajic V.B."/>
            <person name="Brenner S.E."/>
            <person name="Batalov S."/>
            <person name="Forrest A.R."/>
            <person name="Zavolan M."/>
            <person name="Davis M.J."/>
            <person name="Wilming L.G."/>
            <person name="Aidinis V."/>
            <person name="Allen J.E."/>
            <person name="Ambesi-Impiombato A."/>
            <person name="Apweiler R."/>
            <person name="Aturaliya R.N."/>
            <person name="Bailey T.L."/>
            <person name="Bansal M."/>
            <person name="Baxter L."/>
            <person name="Beisel K.W."/>
            <person name="Bersano T."/>
            <person name="Bono H."/>
            <person name="Chalk A.M."/>
            <person name="Chiu K.P."/>
            <person name="Choudhary V."/>
            <person name="Christoffels A."/>
            <person name="Clutterbuck D.R."/>
            <person name="Crowe M.L."/>
            <person name="Dalla E."/>
            <person name="Dalrymple B.P."/>
            <person name="de Bono B."/>
            <person name="Della Gatta G."/>
            <person name="di Bernardo D."/>
            <person name="Down T."/>
            <person name="Engstrom P."/>
            <person name="Fagiolini M."/>
            <person name="Faulkner G."/>
            <person name="Fletcher C.F."/>
            <person name="Fukushima T."/>
            <person name="Furuno M."/>
            <person name="Futaki S."/>
            <person name="Gariboldi M."/>
            <person name="Georgii-Hemming P."/>
            <person name="Gingeras T.R."/>
            <person name="Gojobori T."/>
            <person name="Green R.E."/>
            <person name="Gustincich S."/>
            <person name="Harbers M."/>
            <person name="Hayashi Y."/>
            <person name="Hensch T.K."/>
            <person name="Hirokawa N."/>
            <person name="Hill D."/>
            <person name="Huminiecki L."/>
            <person name="Iacono M."/>
            <person name="Ikeo K."/>
            <person name="Iwama A."/>
            <person name="Ishikawa T."/>
            <person name="Jakt M."/>
            <person name="Kanapin A."/>
            <person name="Katoh M."/>
            <person name="Kawasawa Y."/>
            <person name="Kelso J."/>
            <person name="Kitamura H."/>
            <person name="Kitano H."/>
            <person name="Kollias G."/>
            <person name="Krishnan S.P."/>
            <person name="Kruger A."/>
            <person name="Kummerfeld S.K."/>
            <person name="Kurochkin I.V."/>
            <person name="Lareau L.F."/>
            <person name="Lazarevic D."/>
            <person name="Lipovich L."/>
            <person name="Liu J."/>
            <person name="Liuni S."/>
            <person name="McWilliam S."/>
            <person name="Madan Babu M."/>
            <person name="Madera M."/>
            <person name="Marchionni L."/>
            <person name="Matsuda H."/>
            <person name="Matsuzawa S."/>
            <person name="Miki H."/>
            <person name="Mignone F."/>
            <person name="Miyake S."/>
            <person name="Morris K."/>
            <person name="Mottagui-Tabar S."/>
            <person name="Mulder N."/>
            <person name="Nakano N."/>
            <person name="Nakauchi H."/>
            <person name="Ng P."/>
            <person name="Nilsson R."/>
            <person name="Nishiguchi S."/>
            <person name="Nishikawa S."/>
            <person name="Nori F."/>
            <person name="Ohara O."/>
            <person name="Okazaki Y."/>
            <person name="Orlando V."/>
            <person name="Pang K.C."/>
            <person name="Pavan W.J."/>
            <person name="Pavesi G."/>
            <person name="Pesole G."/>
            <person name="Petrovsky N."/>
            <person name="Piazza S."/>
            <person name="Reed J."/>
            <person name="Reid J.F."/>
            <person name="Ring B.Z."/>
            <person name="Ringwald M."/>
            <person name="Rost B."/>
            <person name="Ruan Y."/>
            <person name="Salzberg S.L."/>
            <person name="Sandelin A."/>
            <person name="Schneider C."/>
            <person name="Schoenbach C."/>
            <person name="Sekiguchi K."/>
            <person name="Semple C.A."/>
            <person name="Seno S."/>
            <person name="Sessa L."/>
            <person name="Sheng Y."/>
            <person name="Shibata Y."/>
            <person name="Shimada H."/>
            <person name="Shimada K."/>
            <person name="Silva D."/>
            <person name="Sinclair B."/>
            <person name="Sperling S."/>
            <person name="Stupka E."/>
            <person name="Sugiura K."/>
            <person name="Sultana R."/>
            <person name="Takenaka Y."/>
            <person name="Taki K."/>
            <person name="Tammoja K."/>
            <person name="Tan S.L."/>
            <person name="Tang S."/>
            <person name="Taylor M.S."/>
            <person name="Tegner J."/>
            <person name="Teichmann S.A."/>
            <person name="Ueda H.R."/>
            <person name="van Nimwegen E."/>
            <person name="Verardo R."/>
            <person name="Wei C.L."/>
            <person name="Yagi K."/>
            <person name="Yamanishi H."/>
            <person name="Zabarovsky E."/>
            <person name="Zhu S."/>
            <person name="Zimmer A."/>
            <person name="Hide W."/>
            <person name="Bult C."/>
            <person name="Grimmond S.M."/>
            <person name="Teasdale R.D."/>
            <person name="Liu E.T."/>
            <person name="Brusic V."/>
            <person name="Quackenbush J."/>
            <person name="Wahlestedt C."/>
            <person name="Mattick J.S."/>
            <person name="Hume D.A."/>
            <person name="Kai C."/>
            <person name="Sasaki D."/>
            <person name="Tomaru Y."/>
            <person name="Fukuda S."/>
            <person name="Kanamori-Katayama M."/>
            <person name="Suzuki M."/>
            <person name="Aoki J."/>
            <person name="Arakawa T."/>
            <person name="Iida J."/>
            <person name="Imamura K."/>
            <person name="Itoh M."/>
            <person name="Kato T."/>
            <person name="Kawaji H."/>
            <person name="Kawagashira N."/>
            <person name="Kawashima T."/>
            <person name="Kojima M."/>
            <person name="Kondo S."/>
            <person name="Konno H."/>
            <person name="Nakano K."/>
            <person name="Ninomiya N."/>
            <person name="Nishio T."/>
            <person name="Okada M."/>
            <person name="Plessy C."/>
            <person name="Shibata K."/>
            <person name="Shiraki T."/>
            <person name="Suzuki S."/>
            <person name="Tagami M."/>
            <person name="Waki K."/>
            <person name="Watahiki A."/>
            <person name="Okamura-Oho Y."/>
            <person name="Suzuki H."/>
            <person name="Kawai J."/>
            <person name="Hayashizaki Y."/>
        </authorList>
    </citation>
    <scope>NUCLEOTIDE SEQUENCE [LARGE SCALE MRNA] (ISOFORM 1)</scope>
    <source>
        <strain>C57BL/6J</strain>
        <tissue>Thymus</tissue>
    </source>
</reference>
<reference key="2">
    <citation type="journal article" date="2004" name="Genome Res.">
        <title>The status, quality, and expansion of the NIH full-length cDNA project: the Mammalian Gene Collection (MGC).</title>
        <authorList>
            <consortium name="The MGC Project Team"/>
        </authorList>
    </citation>
    <scope>NUCLEOTIDE SEQUENCE [LARGE SCALE MRNA] (ISOFORM 2)</scope>
    <source>
        <strain>Czech II</strain>
        <tissue>Mammary gland</tissue>
    </source>
</reference>
<reference key="3">
    <citation type="journal article" date="2010" name="Cell">
        <title>A tissue-specific atlas of mouse protein phosphorylation and expression.</title>
        <authorList>
            <person name="Huttlin E.L."/>
            <person name="Jedrychowski M.P."/>
            <person name="Elias J.E."/>
            <person name="Goswami T."/>
            <person name="Rad R."/>
            <person name="Beausoleil S.A."/>
            <person name="Villen J."/>
            <person name="Haas W."/>
            <person name="Sowa M.E."/>
            <person name="Gygi S.P."/>
        </authorList>
    </citation>
    <scope>PHOSPHORYLATION [LARGE SCALE ANALYSIS] AT SER-284 (ISOFORM 2)</scope>
    <scope>IDENTIFICATION BY MASS SPECTROMETRY [LARGE SCALE ANALYSIS]</scope>
    <source>
        <tissue>Kidney</tissue>
        <tissue>Lung</tissue>
    </source>
</reference>
<keyword id="KW-0025">Alternative splicing</keyword>
<keyword id="KW-1003">Cell membrane</keyword>
<keyword id="KW-0963">Cytoplasm</keyword>
<keyword id="KW-0446">Lipid-binding</keyword>
<keyword id="KW-0472">Membrane</keyword>
<keyword id="KW-0539">Nucleus</keyword>
<keyword id="KW-0597">Phosphoprotein</keyword>
<keyword id="KW-1185">Reference proteome</keyword>
<keyword id="KW-0677">Repeat</keyword>
<name>PKHA1_MOUSE</name>
<organism>
    <name type="scientific">Mus musculus</name>
    <name type="common">Mouse</name>
    <dbReference type="NCBI Taxonomy" id="10090"/>
    <lineage>
        <taxon>Eukaryota</taxon>
        <taxon>Metazoa</taxon>
        <taxon>Chordata</taxon>
        <taxon>Craniata</taxon>
        <taxon>Vertebrata</taxon>
        <taxon>Euteleostomi</taxon>
        <taxon>Mammalia</taxon>
        <taxon>Eutheria</taxon>
        <taxon>Euarchontoglires</taxon>
        <taxon>Glires</taxon>
        <taxon>Rodentia</taxon>
        <taxon>Myomorpha</taxon>
        <taxon>Muroidea</taxon>
        <taxon>Muridae</taxon>
        <taxon>Murinae</taxon>
        <taxon>Mus</taxon>
        <taxon>Mus</taxon>
    </lineage>
</organism>
<dbReference type="EMBL" id="AK083340">
    <property type="protein sequence ID" value="BAC38874.1"/>
    <property type="molecule type" value="mRNA"/>
</dbReference>
<dbReference type="EMBL" id="BC020017">
    <property type="protein sequence ID" value="AAH20017.1"/>
    <property type="molecule type" value="mRNA"/>
</dbReference>
<dbReference type="CCDS" id="CCDS21907.1">
    <molecule id="Q8BUL6-2"/>
</dbReference>
<dbReference type="CCDS" id="CCDS85434.1">
    <molecule id="Q8BUL6-1"/>
</dbReference>
<dbReference type="RefSeq" id="NP_001333444.1">
    <molecule id="Q8BUL6-1"/>
    <property type="nucleotide sequence ID" value="NM_001346515.1"/>
</dbReference>
<dbReference type="RefSeq" id="NP_001369303.1">
    <molecule id="Q8BUL6-1"/>
    <property type="nucleotide sequence ID" value="NM_001382374.1"/>
</dbReference>
<dbReference type="RefSeq" id="NP_598703.1">
    <molecule id="Q8BUL6-2"/>
    <property type="nucleotide sequence ID" value="NM_133942.3"/>
</dbReference>
<dbReference type="RefSeq" id="XP_006507212.1">
    <property type="nucleotide sequence ID" value="XM_006507149.3"/>
</dbReference>
<dbReference type="RefSeq" id="XP_030097796.1">
    <molecule id="Q8BUL6-1"/>
    <property type="nucleotide sequence ID" value="XM_030241936.2"/>
</dbReference>
<dbReference type="SMR" id="Q8BUL6"/>
<dbReference type="BioGRID" id="221667">
    <property type="interactions" value="3"/>
</dbReference>
<dbReference type="FunCoup" id="Q8BUL6">
    <property type="interactions" value="2128"/>
</dbReference>
<dbReference type="STRING" id="10090.ENSMUSP00000074675"/>
<dbReference type="iPTMnet" id="Q8BUL6"/>
<dbReference type="PhosphoSitePlus" id="Q8BUL6"/>
<dbReference type="jPOST" id="Q8BUL6"/>
<dbReference type="PeptideAtlas" id="Q8BUL6"/>
<dbReference type="ProteomicsDB" id="289502">
    <molecule id="Q8BUL6-1"/>
</dbReference>
<dbReference type="ProteomicsDB" id="289503">
    <molecule id="Q8BUL6-2"/>
</dbReference>
<dbReference type="Pumba" id="Q8BUL6"/>
<dbReference type="Antibodypedia" id="1178">
    <property type="antibodies" value="184 antibodies from 28 providers"/>
</dbReference>
<dbReference type="DNASU" id="101476"/>
<dbReference type="Ensembl" id="ENSMUST00000048180.12">
    <molecule id="Q8BUL6-2"/>
    <property type="protein sequence ID" value="ENSMUSP00000035375.6"/>
    <property type="gene ID" value="ENSMUSG00000040268.18"/>
</dbReference>
<dbReference type="Ensembl" id="ENSMUST00000075181.11">
    <molecule id="Q8BUL6-1"/>
    <property type="protein sequence ID" value="ENSMUSP00000074675.5"/>
    <property type="gene ID" value="ENSMUSG00000040268.18"/>
</dbReference>
<dbReference type="GeneID" id="101476"/>
<dbReference type="KEGG" id="mmu:101476"/>
<dbReference type="UCSC" id="uc009kar.1">
    <molecule id="Q8BUL6-1"/>
    <property type="organism name" value="mouse"/>
</dbReference>
<dbReference type="UCSC" id="uc009kat.1">
    <molecule id="Q8BUL6-2"/>
    <property type="organism name" value="mouse"/>
</dbReference>
<dbReference type="AGR" id="MGI:2442213"/>
<dbReference type="CTD" id="59338"/>
<dbReference type="MGI" id="MGI:2442213">
    <property type="gene designation" value="Plekha1"/>
</dbReference>
<dbReference type="VEuPathDB" id="HostDB:ENSMUSG00000040268"/>
<dbReference type="GeneTree" id="ENSGT00940000155157"/>
<dbReference type="HOGENOM" id="CLU_055135_2_1_1"/>
<dbReference type="InParanoid" id="Q8BUL6"/>
<dbReference type="OMA" id="DPKHAFR"/>
<dbReference type="OrthoDB" id="185175at2759"/>
<dbReference type="PhylomeDB" id="Q8BUL6"/>
<dbReference type="TreeFam" id="TF329516"/>
<dbReference type="Reactome" id="R-MMU-1660499">
    <property type="pathway name" value="Synthesis of PIPs at the plasma membrane"/>
</dbReference>
<dbReference type="BioGRID-ORCS" id="101476">
    <property type="hits" value="1 hit in 31 CRISPR screens"/>
</dbReference>
<dbReference type="ChiTaRS" id="Plekha1">
    <property type="organism name" value="mouse"/>
</dbReference>
<dbReference type="PRO" id="PR:Q8BUL6"/>
<dbReference type="Proteomes" id="UP000000589">
    <property type="component" value="Chromosome 7"/>
</dbReference>
<dbReference type="RNAct" id="Q8BUL6">
    <property type="molecule type" value="protein"/>
</dbReference>
<dbReference type="Bgee" id="ENSMUSG00000040268">
    <property type="expression patterns" value="Expressed in retinal neural layer and 280 other cell types or tissues"/>
</dbReference>
<dbReference type="ExpressionAtlas" id="Q8BUL6">
    <property type="expression patterns" value="baseline and differential"/>
</dbReference>
<dbReference type="GO" id="GO:0005829">
    <property type="term" value="C:cytosol"/>
    <property type="evidence" value="ECO:0007669"/>
    <property type="project" value="Ensembl"/>
</dbReference>
<dbReference type="GO" id="GO:0005654">
    <property type="term" value="C:nucleoplasm"/>
    <property type="evidence" value="ECO:0007669"/>
    <property type="project" value="Ensembl"/>
</dbReference>
<dbReference type="GO" id="GO:0032587">
    <property type="term" value="C:ruffle membrane"/>
    <property type="evidence" value="ECO:0007669"/>
    <property type="project" value="Ensembl"/>
</dbReference>
<dbReference type="GO" id="GO:0008289">
    <property type="term" value="F:lipid binding"/>
    <property type="evidence" value="ECO:0007669"/>
    <property type="project" value="UniProtKB-KW"/>
</dbReference>
<dbReference type="GO" id="GO:0030165">
    <property type="term" value="F:PDZ domain binding"/>
    <property type="evidence" value="ECO:0007669"/>
    <property type="project" value="Ensembl"/>
</dbReference>
<dbReference type="GO" id="GO:0043325">
    <property type="term" value="F:phosphatidylinositol-3,4-bisphosphate binding"/>
    <property type="evidence" value="ECO:0007669"/>
    <property type="project" value="Ensembl"/>
</dbReference>
<dbReference type="GO" id="GO:0008209">
    <property type="term" value="P:androgen metabolic process"/>
    <property type="evidence" value="ECO:0000315"/>
    <property type="project" value="MGI"/>
</dbReference>
<dbReference type="GO" id="GO:0050853">
    <property type="term" value="P:B cell receptor signaling pathway"/>
    <property type="evidence" value="ECO:0007669"/>
    <property type="project" value="Ensembl"/>
</dbReference>
<dbReference type="GO" id="GO:0070301">
    <property type="term" value="P:cellular response to hydrogen peroxide"/>
    <property type="evidence" value="ECO:0007669"/>
    <property type="project" value="Ensembl"/>
</dbReference>
<dbReference type="GO" id="GO:0045184">
    <property type="term" value="P:establishment of protein localization"/>
    <property type="evidence" value="ECO:0007669"/>
    <property type="project" value="Ensembl"/>
</dbReference>
<dbReference type="GO" id="GO:0008210">
    <property type="term" value="P:estrogen metabolic process"/>
    <property type="evidence" value="ECO:0000316"/>
    <property type="project" value="MGI"/>
</dbReference>
<dbReference type="GO" id="GO:0060325">
    <property type="term" value="P:face morphogenesis"/>
    <property type="evidence" value="ECO:0000315"/>
    <property type="project" value="MGI"/>
</dbReference>
<dbReference type="GO" id="GO:0008585">
    <property type="term" value="P:female gonad development"/>
    <property type="evidence" value="ECO:0000316"/>
    <property type="project" value="MGI"/>
</dbReference>
<dbReference type="GO" id="GO:0033327">
    <property type="term" value="P:Leydig cell differentiation"/>
    <property type="evidence" value="ECO:0000315"/>
    <property type="project" value="MGI"/>
</dbReference>
<dbReference type="GO" id="GO:0001553">
    <property type="term" value="P:luteinization"/>
    <property type="evidence" value="ECO:0000316"/>
    <property type="project" value="MGI"/>
</dbReference>
<dbReference type="GO" id="GO:0035264">
    <property type="term" value="P:multicellular organism growth"/>
    <property type="evidence" value="ECO:0000315"/>
    <property type="project" value="MGI"/>
</dbReference>
<dbReference type="GO" id="GO:0051898">
    <property type="term" value="P:negative regulation of phosphatidylinositol 3-kinase/protein kinase B signal transduction"/>
    <property type="evidence" value="ECO:0007669"/>
    <property type="project" value="Ensembl"/>
</dbReference>
<dbReference type="GO" id="GO:0043491">
    <property type="term" value="P:phosphatidylinositol 3-kinase/protein kinase B signal transduction"/>
    <property type="evidence" value="ECO:0007669"/>
    <property type="project" value="Ensembl"/>
</dbReference>
<dbReference type="GO" id="GO:0048008">
    <property type="term" value="P:platelet-derived growth factor receptor signaling pathway"/>
    <property type="evidence" value="ECO:0000315"/>
    <property type="project" value="MGI"/>
</dbReference>
<dbReference type="GO" id="GO:0009791">
    <property type="term" value="P:post-embryonic development"/>
    <property type="evidence" value="ECO:0000315"/>
    <property type="project" value="MGI"/>
</dbReference>
<dbReference type="GO" id="GO:0060021">
    <property type="term" value="P:roof of mouth development"/>
    <property type="evidence" value="ECO:0000315"/>
    <property type="project" value="MGI"/>
</dbReference>
<dbReference type="GO" id="GO:0031529">
    <property type="term" value="P:ruffle organization"/>
    <property type="evidence" value="ECO:0007669"/>
    <property type="project" value="Ensembl"/>
</dbReference>
<dbReference type="GO" id="GO:0048705">
    <property type="term" value="P:skeletal system morphogenesis"/>
    <property type="evidence" value="ECO:0000315"/>
    <property type="project" value="MGI"/>
</dbReference>
<dbReference type="GO" id="GO:0007283">
    <property type="term" value="P:spermatogenesis"/>
    <property type="evidence" value="ECO:0000315"/>
    <property type="project" value="MGI"/>
</dbReference>
<dbReference type="CDD" id="cd13270">
    <property type="entry name" value="PH1_TAPP1_2"/>
    <property type="match status" value="1"/>
</dbReference>
<dbReference type="CDD" id="cd13271">
    <property type="entry name" value="PH2_TAPP1_2"/>
    <property type="match status" value="1"/>
</dbReference>
<dbReference type="FunFam" id="2.30.29.30:FF:000049">
    <property type="entry name" value="pleckstrin homology domain-containing family A member 1 isoform X1"/>
    <property type="match status" value="1"/>
</dbReference>
<dbReference type="FunFam" id="2.30.29.30:FF:000042">
    <property type="entry name" value="pleckstrin homology domain-containing family A member 1 isoform X2"/>
    <property type="match status" value="1"/>
</dbReference>
<dbReference type="Gene3D" id="2.30.29.30">
    <property type="entry name" value="Pleckstrin-homology domain (PH domain)/Phosphotyrosine-binding domain (PTB)"/>
    <property type="match status" value="2"/>
</dbReference>
<dbReference type="InterPro" id="IPR011993">
    <property type="entry name" value="PH-like_dom_sf"/>
</dbReference>
<dbReference type="InterPro" id="IPR001849">
    <property type="entry name" value="PH_domain"/>
</dbReference>
<dbReference type="InterPro" id="IPR051707">
    <property type="entry name" value="PI-Interact_SigTrans_Reg"/>
</dbReference>
<dbReference type="PANTHER" id="PTHR14336:SF4">
    <property type="entry name" value="PLECKSTRIN HOMOLOGY DOMAIN-CONTAINING FAMILY A MEMBER 1"/>
    <property type="match status" value="1"/>
</dbReference>
<dbReference type="PANTHER" id="PTHR14336">
    <property type="entry name" value="TANDEM PH DOMAIN CONTAINING PROTEIN"/>
    <property type="match status" value="1"/>
</dbReference>
<dbReference type="Pfam" id="PF00169">
    <property type="entry name" value="PH"/>
    <property type="match status" value="2"/>
</dbReference>
<dbReference type="SMART" id="SM00233">
    <property type="entry name" value="PH"/>
    <property type="match status" value="2"/>
</dbReference>
<dbReference type="SUPFAM" id="SSF50729">
    <property type="entry name" value="PH domain-like"/>
    <property type="match status" value="2"/>
</dbReference>
<dbReference type="PROSITE" id="PS50003">
    <property type="entry name" value="PH_DOMAIN"/>
    <property type="match status" value="2"/>
</dbReference>
<protein>
    <recommendedName>
        <fullName>Pleckstrin homology domain-containing family A member 1</fullName>
        <shortName>PH domain-containing family A member 1</shortName>
    </recommendedName>
    <alternativeName>
        <fullName>Tandem PH domain-containing protein 1</fullName>
        <shortName>TAPP-1</shortName>
    </alternativeName>
</protein>